<protein>
    <recommendedName>
        <fullName evidence="1">Translational regulator CsrA</fullName>
    </recommendedName>
    <alternativeName>
        <fullName evidence="1">Carbon storage regulator</fullName>
    </alternativeName>
</protein>
<organism>
    <name type="scientific">Shewanella sp. (strain ANA-3)</name>
    <dbReference type="NCBI Taxonomy" id="94122"/>
    <lineage>
        <taxon>Bacteria</taxon>
        <taxon>Pseudomonadati</taxon>
        <taxon>Pseudomonadota</taxon>
        <taxon>Gammaproteobacteria</taxon>
        <taxon>Alteromonadales</taxon>
        <taxon>Shewanellaceae</taxon>
        <taxon>Shewanella</taxon>
    </lineage>
</organism>
<sequence length="65" mass="7125">MLILTRRVGETLMIGDEVTVTVLGVKGNQVRIGVNAPKEVSVHREEIYQRIQSEKSGTPSEGGNF</sequence>
<evidence type="ECO:0000255" key="1">
    <source>
        <dbReference type="HAMAP-Rule" id="MF_00167"/>
    </source>
</evidence>
<dbReference type="EMBL" id="CP000469">
    <property type="protein sequence ID" value="ABK47365.1"/>
    <property type="molecule type" value="Genomic_DNA"/>
</dbReference>
<dbReference type="RefSeq" id="WP_006082602.1">
    <property type="nucleotide sequence ID" value="NC_008577.1"/>
</dbReference>
<dbReference type="SMR" id="A0KU96"/>
<dbReference type="STRING" id="94122.Shewana3_1130"/>
<dbReference type="GeneID" id="94727129"/>
<dbReference type="KEGG" id="shn:Shewana3_1130"/>
<dbReference type="eggNOG" id="COG1551">
    <property type="taxonomic scope" value="Bacteria"/>
</dbReference>
<dbReference type="HOGENOM" id="CLU_164837_2_2_6"/>
<dbReference type="OrthoDB" id="9809061at2"/>
<dbReference type="Proteomes" id="UP000002589">
    <property type="component" value="Chromosome"/>
</dbReference>
<dbReference type="GO" id="GO:0005829">
    <property type="term" value="C:cytosol"/>
    <property type="evidence" value="ECO:0007669"/>
    <property type="project" value="TreeGrafter"/>
</dbReference>
<dbReference type="GO" id="GO:0048027">
    <property type="term" value="F:mRNA 5'-UTR binding"/>
    <property type="evidence" value="ECO:0007669"/>
    <property type="project" value="UniProtKB-UniRule"/>
</dbReference>
<dbReference type="GO" id="GO:0006402">
    <property type="term" value="P:mRNA catabolic process"/>
    <property type="evidence" value="ECO:0007669"/>
    <property type="project" value="InterPro"/>
</dbReference>
<dbReference type="GO" id="GO:0045947">
    <property type="term" value="P:negative regulation of translational initiation"/>
    <property type="evidence" value="ECO:0007669"/>
    <property type="project" value="UniProtKB-UniRule"/>
</dbReference>
<dbReference type="GO" id="GO:0045948">
    <property type="term" value="P:positive regulation of translational initiation"/>
    <property type="evidence" value="ECO:0007669"/>
    <property type="project" value="UniProtKB-UniRule"/>
</dbReference>
<dbReference type="GO" id="GO:0006109">
    <property type="term" value="P:regulation of carbohydrate metabolic process"/>
    <property type="evidence" value="ECO:0007669"/>
    <property type="project" value="UniProtKB-UniRule"/>
</dbReference>
<dbReference type="FunFam" id="2.60.40.4380:FF:000001">
    <property type="entry name" value="Translational regulator CsrA"/>
    <property type="match status" value="1"/>
</dbReference>
<dbReference type="Gene3D" id="2.60.40.4380">
    <property type="entry name" value="Translational regulator CsrA"/>
    <property type="match status" value="1"/>
</dbReference>
<dbReference type="HAMAP" id="MF_00167">
    <property type="entry name" value="CsrA"/>
    <property type="match status" value="1"/>
</dbReference>
<dbReference type="InterPro" id="IPR003751">
    <property type="entry name" value="CsrA"/>
</dbReference>
<dbReference type="InterPro" id="IPR036107">
    <property type="entry name" value="CsrA_sf"/>
</dbReference>
<dbReference type="NCBIfam" id="TIGR00202">
    <property type="entry name" value="csrA"/>
    <property type="match status" value="1"/>
</dbReference>
<dbReference type="NCBIfam" id="NF002469">
    <property type="entry name" value="PRK01712.1"/>
    <property type="match status" value="1"/>
</dbReference>
<dbReference type="PANTHER" id="PTHR34984">
    <property type="entry name" value="CARBON STORAGE REGULATOR"/>
    <property type="match status" value="1"/>
</dbReference>
<dbReference type="PANTHER" id="PTHR34984:SF1">
    <property type="entry name" value="CARBON STORAGE REGULATOR"/>
    <property type="match status" value="1"/>
</dbReference>
<dbReference type="Pfam" id="PF02599">
    <property type="entry name" value="CsrA"/>
    <property type="match status" value="1"/>
</dbReference>
<dbReference type="SUPFAM" id="SSF117130">
    <property type="entry name" value="CsrA-like"/>
    <property type="match status" value="1"/>
</dbReference>
<keyword id="KW-0010">Activator</keyword>
<keyword id="KW-0963">Cytoplasm</keyword>
<keyword id="KW-0678">Repressor</keyword>
<keyword id="KW-0694">RNA-binding</keyword>
<keyword id="KW-0810">Translation regulation</keyword>
<gene>
    <name evidence="1" type="primary">csrA</name>
    <name type="ordered locus">Shewana3_1130</name>
</gene>
<comment type="function">
    <text evidence="1">A key translational regulator that binds mRNA to regulate translation initiation and/or mRNA stability. Mediates global changes in gene expression, shifting from rapid growth to stress survival by linking envelope stress, the stringent response and the catabolite repression systems. Usually binds in the 5'-UTR; binding at or near the Shine-Dalgarno sequence prevents ribosome-binding, repressing translation, binding elsewhere in the 5'-UTR can activate translation and/or stabilize the mRNA. Its function is antagonized by small RNA(s).</text>
</comment>
<comment type="subunit">
    <text evidence="1">Homodimer; the beta-strands of each monomer intercalate to form a hydrophobic core, while the alpha-helices form wings that extend away from the core.</text>
</comment>
<comment type="subcellular location">
    <subcellularLocation>
        <location evidence="1">Cytoplasm</location>
    </subcellularLocation>
</comment>
<comment type="similarity">
    <text evidence="1">Belongs to the CsrA/RsmA family.</text>
</comment>
<proteinExistence type="inferred from homology"/>
<feature type="chain" id="PRO_1000023422" description="Translational regulator CsrA">
    <location>
        <begin position="1"/>
        <end position="65"/>
    </location>
</feature>
<name>CSRA_SHESA</name>
<reference key="1">
    <citation type="submission" date="2006-09" db="EMBL/GenBank/DDBJ databases">
        <title>Complete sequence of chromosome 1 of Shewanella sp. ANA-3.</title>
        <authorList>
            <person name="Copeland A."/>
            <person name="Lucas S."/>
            <person name="Lapidus A."/>
            <person name="Barry K."/>
            <person name="Detter J.C."/>
            <person name="Glavina del Rio T."/>
            <person name="Hammon N."/>
            <person name="Israni S."/>
            <person name="Dalin E."/>
            <person name="Tice H."/>
            <person name="Pitluck S."/>
            <person name="Chertkov O."/>
            <person name="Brettin T."/>
            <person name="Bruce D."/>
            <person name="Han C."/>
            <person name="Tapia R."/>
            <person name="Gilna P."/>
            <person name="Schmutz J."/>
            <person name="Larimer F."/>
            <person name="Land M."/>
            <person name="Hauser L."/>
            <person name="Kyrpides N."/>
            <person name="Kim E."/>
            <person name="Newman D."/>
            <person name="Salticov C."/>
            <person name="Konstantinidis K."/>
            <person name="Klappenback J."/>
            <person name="Tiedje J."/>
            <person name="Richardson P."/>
        </authorList>
    </citation>
    <scope>NUCLEOTIDE SEQUENCE [LARGE SCALE GENOMIC DNA]</scope>
    <source>
        <strain>ANA-3</strain>
    </source>
</reference>
<accession>A0KU96</accession>